<evidence type="ECO:0000255" key="1">
    <source>
        <dbReference type="HAMAP-Rule" id="MF_00315"/>
    </source>
</evidence>
<protein>
    <recommendedName>
        <fullName evidence="1">1-deoxy-D-xylulose-5-phosphate synthase</fullName>
        <ecNumber evidence="1">2.2.1.7</ecNumber>
    </recommendedName>
    <alternativeName>
        <fullName evidence="1">1-deoxyxylulose-5-phosphate synthase</fullName>
        <shortName evidence="1">DXP synthase</shortName>
        <shortName evidence="1">DXPS</shortName>
    </alternativeName>
</protein>
<keyword id="KW-0414">Isoprene biosynthesis</keyword>
<keyword id="KW-0460">Magnesium</keyword>
<keyword id="KW-0479">Metal-binding</keyword>
<keyword id="KW-1185">Reference proteome</keyword>
<keyword id="KW-0784">Thiamine biosynthesis</keyword>
<keyword id="KW-0786">Thiamine pyrophosphate</keyword>
<keyword id="KW-0808">Transferase</keyword>
<reference key="1">
    <citation type="journal article" date="2010" name="J. Bacteriol.">
        <title>Complete genome sequence of Beijerinckia indica subsp. indica.</title>
        <authorList>
            <person name="Tamas I."/>
            <person name="Dedysh S.N."/>
            <person name="Liesack W."/>
            <person name="Stott M.B."/>
            <person name="Alam M."/>
            <person name="Murrell J.C."/>
            <person name="Dunfield P.F."/>
        </authorList>
    </citation>
    <scope>NUCLEOTIDE SEQUENCE [LARGE SCALE GENOMIC DNA]</scope>
    <source>
        <strain>ATCC 9039 / DSM 1715 / NCIMB 8712</strain>
    </source>
</reference>
<proteinExistence type="inferred from homology"/>
<name>DXS_BEII9</name>
<comment type="function">
    <text evidence="1">Catalyzes the acyloin condensation reaction between C atoms 2 and 3 of pyruvate and glyceraldehyde 3-phosphate to yield 1-deoxy-D-xylulose-5-phosphate (DXP).</text>
</comment>
<comment type="catalytic activity">
    <reaction evidence="1">
        <text>D-glyceraldehyde 3-phosphate + pyruvate + H(+) = 1-deoxy-D-xylulose 5-phosphate + CO2</text>
        <dbReference type="Rhea" id="RHEA:12605"/>
        <dbReference type="ChEBI" id="CHEBI:15361"/>
        <dbReference type="ChEBI" id="CHEBI:15378"/>
        <dbReference type="ChEBI" id="CHEBI:16526"/>
        <dbReference type="ChEBI" id="CHEBI:57792"/>
        <dbReference type="ChEBI" id="CHEBI:59776"/>
        <dbReference type="EC" id="2.2.1.7"/>
    </reaction>
</comment>
<comment type="cofactor">
    <cofactor evidence="1">
        <name>Mg(2+)</name>
        <dbReference type="ChEBI" id="CHEBI:18420"/>
    </cofactor>
    <text evidence="1">Binds 1 Mg(2+) ion per subunit.</text>
</comment>
<comment type="cofactor">
    <cofactor evidence="1">
        <name>thiamine diphosphate</name>
        <dbReference type="ChEBI" id="CHEBI:58937"/>
    </cofactor>
    <text evidence="1">Binds 1 thiamine pyrophosphate per subunit.</text>
</comment>
<comment type="pathway">
    <text evidence="1">Metabolic intermediate biosynthesis; 1-deoxy-D-xylulose 5-phosphate biosynthesis; 1-deoxy-D-xylulose 5-phosphate from D-glyceraldehyde 3-phosphate and pyruvate: step 1/1.</text>
</comment>
<comment type="subunit">
    <text evidence="1">Homodimer.</text>
</comment>
<comment type="similarity">
    <text evidence="1">Belongs to the transketolase family. DXPS subfamily.</text>
</comment>
<accession>B2IDK3</accession>
<sequence length="642" mass="68695">MRTDSKTPLLDTIATPTDLRRLKESDLAQLADELRTETIDAVSVTGGHLGAGLGVVELTVALHYVFDTPHDRLIWDVGHQAYPHKILTGRRDRIRTLRRAGGLSGFTKRSESVYDPFGTAHSSTSISAGLGMAAATTLSGGNNNVIAVIGDGSMSAGMAYEAMNNAGAMHSRLIIILNDNEMSIAPPAGALSAYLARLVSGGTYRTVREAAKQLGRHLPHFIYDRARKTEEFARNFWAGGTMFEELGIYYVGPIDGHNLDHLLPVLKNVRDFKETGPILVHVVTQKGKGYAPAAAASDKYHSVNTFDVVTGVQTKPKANAPSYTRVFADALVKEAERDDKIVAITAAMPGGTGLDVFGKAFPERTFDVGIAEQHAVTFAAGLATEGYRPFCALYSTFLQRGYDQVVHDVAIQNLPVRFAIDRAGLVGADGATHAGSFDVSYLGILPNMVIMAAADEAELVHMVATAAAYDEGPIAFRYPRGEGVGIELPQIGEILDIGRGRIVREGTTVALLSLGTRLAEASKAAEQLASYGISVTVADARFAKPLDLDLVRRLAKNHEVLITIEEGSVGGFGSFVMQALAEEGLLDGTGLKFRSMVLPDTFLDHDKPEKLYAQAGLDAKGIVAKVLATLGRENEAHQSLIA</sequence>
<gene>
    <name evidence="1" type="primary">dxs</name>
    <name type="ordered locus">Bind_1811</name>
</gene>
<organism>
    <name type="scientific">Beijerinckia indica subsp. indica (strain ATCC 9039 / DSM 1715 / NCIMB 8712)</name>
    <dbReference type="NCBI Taxonomy" id="395963"/>
    <lineage>
        <taxon>Bacteria</taxon>
        <taxon>Pseudomonadati</taxon>
        <taxon>Pseudomonadota</taxon>
        <taxon>Alphaproteobacteria</taxon>
        <taxon>Hyphomicrobiales</taxon>
        <taxon>Beijerinckiaceae</taxon>
        <taxon>Beijerinckia</taxon>
    </lineage>
</organism>
<dbReference type="EC" id="2.2.1.7" evidence="1"/>
<dbReference type="EMBL" id="CP001016">
    <property type="protein sequence ID" value="ACB95439.1"/>
    <property type="molecule type" value="Genomic_DNA"/>
</dbReference>
<dbReference type="RefSeq" id="WP_012384796.1">
    <property type="nucleotide sequence ID" value="NC_010581.1"/>
</dbReference>
<dbReference type="SMR" id="B2IDK3"/>
<dbReference type="STRING" id="395963.Bind_1811"/>
<dbReference type="KEGG" id="bid:Bind_1811"/>
<dbReference type="eggNOG" id="COG1154">
    <property type="taxonomic scope" value="Bacteria"/>
</dbReference>
<dbReference type="HOGENOM" id="CLU_009227_1_4_5"/>
<dbReference type="OrthoDB" id="9803371at2"/>
<dbReference type="UniPathway" id="UPA00064">
    <property type="reaction ID" value="UER00091"/>
</dbReference>
<dbReference type="Proteomes" id="UP000001695">
    <property type="component" value="Chromosome"/>
</dbReference>
<dbReference type="GO" id="GO:0008661">
    <property type="term" value="F:1-deoxy-D-xylulose-5-phosphate synthase activity"/>
    <property type="evidence" value="ECO:0007669"/>
    <property type="project" value="UniProtKB-UniRule"/>
</dbReference>
<dbReference type="GO" id="GO:0000287">
    <property type="term" value="F:magnesium ion binding"/>
    <property type="evidence" value="ECO:0007669"/>
    <property type="project" value="UniProtKB-UniRule"/>
</dbReference>
<dbReference type="GO" id="GO:0030976">
    <property type="term" value="F:thiamine pyrophosphate binding"/>
    <property type="evidence" value="ECO:0007669"/>
    <property type="project" value="UniProtKB-UniRule"/>
</dbReference>
<dbReference type="GO" id="GO:0052865">
    <property type="term" value="P:1-deoxy-D-xylulose 5-phosphate biosynthetic process"/>
    <property type="evidence" value="ECO:0007669"/>
    <property type="project" value="UniProtKB-UniPathway"/>
</dbReference>
<dbReference type="GO" id="GO:0019682">
    <property type="term" value="P:glyceraldehyde-3-phosphate metabolic process"/>
    <property type="evidence" value="ECO:0007669"/>
    <property type="project" value="UniProtKB-ARBA"/>
</dbReference>
<dbReference type="GO" id="GO:0016114">
    <property type="term" value="P:terpenoid biosynthetic process"/>
    <property type="evidence" value="ECO:0007669"/>
    <property type="project" value="UniProtKB-UniRule"/>
</dbReference>
<dbReference type="GO" id="GO:0009228">
    <property type="term" value="P:thiamine biosynthetic process"/>
    <property type="evidence" value="ECO:0007669"/>
    <property type="project" value="UniProtKB-UniRule"/>
</dbReference>
<dbReference type="CDD" id="cd02007">
    <property type="entry name" value="TPP_DXS"/>
    <property type="match status" value="1"/>
</dbReference>
<dbReference type="CDD" id="cd07033">
    <property type="entry name" value="TPP_PYR_DXS_TK_like"/>
    <property type="match status" value="1"/>
</dbReference>
<dbReference type="FunFam" id="3.40.50.920:FF:000002">
    <property type="entry name" value="1-deoxy-D-xylulose-5-phosphate synthase"/>
    <property type="match status" value="1"/>
</dbReference>
<dbReference type="FunFam" id="3.40.50.970:FF:000005">
    <property type="entry name" value="1-deoxy-D-xylulose-5-phosphate synthase"/>
    <property type="match status" value="1"/>
</dbReference>
<dbReference type="Gene3D" id="3.40.50.920">
    <property type="match status" value="1"/>
</dbReference>
<dbReference type="Gene3D" id="3.40.50.970">
    <property type="match status" value="2"/>
</dbReference>
<dbReference type="HAMAP" id="MF_00315">
    <property type="entry name" value="DXP_synth"/>
    <property type="match status" value="1"/>
</dbReference>
<dbReference type="InterPro" id="IPR005477">
    <property type="entry name" value="Dxylulose-5-P_synthase"/>
</dbReference>
<dbReference type="InterPro" id="IPR029061">
    <property type="entry name" value="THDP-binding"/>
</dbReference>
<dbReference type="InterPro" id="IPR009014">
    <property type="entry name" value="Transketo_C/PFOR_II"/>
</dbReference>
<dbReference type="InterPro" id="IPR005475">
    <property type="entry name" value="Transketolase-like_Pyr-bd"/>
</dbReference>
<dbReference type="InterPro" id="IPR020826">
    <property type="entry name" value="Transketolase_BS"/>
</dbReference>
<dbReference type="InterPro" id="IPR033248">
    <property type="entry name" value="Transketolase_C"/>
</dbReference>
<dbReference type="InterPro" id="IPR049557">
    <property type="entry name" value="Transketolase_CS"/>
</dbReference>
<dbReference type="NCBIfam" id="TIGR00204">
    <property type="entry name" value="dxs"/>
    <property type="match status" value="1"/>
</dbReference>
<dbReference type="NCBIfam" id="NF003933">
    <property type="entry name" value="PRK05444.2-2"/>
    <property type="match status" value="1"/>
</dbReference>
<dbReference type="PANTHER" id="PTHR43322">
    <property type="entry name" value="1-D-DEOXYXYLULOSE 5-PHOSPHATE SYNTHASE-RELATED"/>
    <property type="match status" value="1"/>
</dbReference>
<dbReference type="PANTHER" id="PTHR43322:SF5">
    <property type="entry name" value="1-DEOXY-D-XYLULOSE-5-PHOSPHATE SYNTHASE, CHLOROPLASTIC"/>
    <property type="match status" value="1"/>
</dbReference>
<dbReference type="Pfam" id="PF13292">
    <property type="entry name" value="DXP_synthase_N"/>
    <property type="match status" value="1"/>
</dbReference>
<dbReference type="Pfam" id="PF02779">
    <property type="entry name" value="Transket_pyr"/>
    <property type="match status" value="1"/>
</dbReference>
<dbReference type="Pfam" id="PF02780">
    <property type="entry name" value="Transketolase_C"/>
    <property type="match status" value="1"/>
</dbReference>
<dbReference type="SMART" id="SM00861">
    <property type="entry name" value="Transket_pyr"/>
    <property type="match status" value="1"/>
</dbReference>
<dbReference type="SUPFAM" id="SSF52518">
    <property type="entry name" value="Thiamin diphosphate-binding fold (THDP-binding)"/>
    <property type="match status" value="2"/>
</dbReference>
<dbReference type="SUPFAM" id="SSF52922">
    <property type="entry name" value="TK C-terminal domain-like"/>
    <property type="match status" value="1"/>
</dbReference>
<dbReference type="PROSITE" id="PS00801">
    <property type="entry name" value="TRANSKETOLASE_1"/>
    <property type="match status" value="1"/>
</dbReference>
<dbReference type="PROSITE" id="PS00802">
    <property type="entry name" value="TRANSKETOLASE_2"/>
    <property type="match status" value="1"/>
</dbReference>
<feature type="chain" id="PRO_1000115722" description="1-deoxy-D-xylulose-5-phosphate synthase">
    <location>
        <begin position="1"/>
        <end position="642"/>
    </location>
</feature>
<feature type="binding site" evidence="1">
    <location>
        <position position="79"/>
    </location>
    <ligand>
        <name>thiamine diphosphate</name>
        <dbReference type="ChEBI" id="CHEBI:58937"/>
    </ligand>
</feature>
<feature type="binding site" evidence="1">
    <location>
        <begin position="120"/>
        <end position="122"/>
    </location>
    <ligand>
        <name>thiamine diphosphate</name>
        <dbReference type="ChEBI" id="CHEBI:58937"/>
    </ligand>
</feature>
<feature type="binding site" evidence="1">
    <location>
        <position position="151"/>
    </location>
    <ligand>
        <name>Mg(2+)</name>
        <dbReference type="ChEBI" id="CHEBI:18420"/>
    </ligand>
</feature>
<feature type="binding site" evidence="1">
    <location>
        <begin position="152"/>
        <end position="153"/>
    </location>
    <ligand>
        <name>thiamine diphosphate</name>
        <dbReference type="ChEBI" id="CHEBI:58937"/>
    </ligand>
</feature>
<feature type="binding site" evidence="1">
    <location>
        <position position="180"/>
    </location>
    <ligand>
        <name>Mg(2+)</name>
        <dbReference type="ChEBI" id="CHEBI:18420"/>
    </ligand>
</feature>
<feature type="binding site" evidence="1">
    <location>
        <position position="180"/>
    </location>
    <ligand>
        <name>thiamine diphosphate</name>
        <dbReference type="ChEBI" id="CHEBI:58937"/>
    </ligand>
</feature>
<feature type="binding site" evidence="1">
    <location>
        <position position="290"/>
    </location>
    <ligand>
        <name>thiamine diphosphate</name>
        <dbReference type="ChEBI" id="CHEBI:58937"/>
    </ligand>
</feature>
<feature type="binding site" evidence="1">
    <location>
        <position position="372"/>
    </location>
    <ligand>
        <name>thiamine diphosphate</name>
        <dbReference type="ChEBI" id="CHEBI:58937"/>
    </ligand>
</feature>